<name>RLMN_FRATH</name>
<proteinExistence type="inferred from homology"/>
<accession>Q2A3H3</accession>
<gene>
    <name evidence="1" type="primary">rlmN</name>
    <name type="ordered locus">FTL_1028</name>
</gene>
<reference key="1">
    <citation type="submission" date="2006-03" db="EMBL/GenBank/DDBJ databases">
        <title>Complete genome sequence of Francisella tularensis LVS (Live Vaccine Strain).</title>
        <authorList>
            <person name="Chain P."/>
            <person name="Larimer F."/>
            <person name="Land M."/>
            <person name="Stilwagen S."/>
            <person name="Larsson P."/>
            <person name="Bearden S."/>
            <person name="Chu M."/>
            <person name="Oyston P."/>
            <person name="Forsman M."/>
            <person name="Andersson S."/>
            <person name="Lindler L."/>
            <person name="Titball R."/>
            <person name="Garcia E."/>
        </authorList>
    </citation>
    <scope>NUCLEOTIDE SEQUENCE [LARGE SCALE GENOMIC DNA]</scope>
    <source>
        <strain>LVS</strain>
    </source>
</reference>
<comment type="function">
    <text evidence="1">Specifically methylates position 2 of adenine 2503 in 23S rRNA and position 2 of adenine 37 in tRNAs. m2A2503 modification seems to play a crucial role in the proofreading step occurring at the peptidyl transferase center and thus would serve to optimize ribosomal fidelity.</text>
</comment>
<comment type="catalytic activity">
    <reaction evidence="1">
        <text>adenosine(2503) in 23S rRNA + 2 reduced [2Fe-2S]-[ferredoxin] + 2 S-adenosyl-L-methionine = 2-methyladenosine(2503) in 23S rRNA + 5'-deoxyadenosine + L-methionine + 2 oxidized [2Fe-2S]-[ferredoxin] + S-adenosyl-L-homocysteine</text>
        <dbReference type="Rhea" id="RHEA:42916"/>
        <dbReference type="Rhea" id="RHEA-COMP:10000"/>
        <dbReference type="Rhea" id="RHEA-COMP:10001"/>
        <dbReference type="Rhea" id="RHEA-COMP:10152"/>
        <dbReference type="Rhea" id="RHEA-COMP:10282"/>
        <dbReference type="ChEBI" id="CHEBI:17319"/>
        <dbReference type="ChEBI" id="CHEBI:33737"/>
        <dbReference type="ChEBI" id="CHEBI:33738"/>
        <dbReference type="ChEBI" id="CHEBI:57844"/>
        <dbReference type="ChEBI" id="CHEBI:57856"/>
        <dbReference type="ChEBI" id="CHEBI:59789"/>
        <dbReference type="ChEBI" id="CHEBI:74411"/>
        <dbReference type="ChEBI" id="CHEBI:74497"/>
        <dbReference type="EC" id="2.1.1.192"/>
    </reaction>
</comment>
<comment type="catalytic activity">
    <reaction evidence="1">
        <text>adenosine(37) in tRNA + 2 reduced [2Fe-2S]-[ferredoxin] + 2 S-adenosyl-L-methionine = 2-methyladenosine(37) in tRNA + 5'-deoxyadenosine + L-methionine + 2 oxidized [2Fe-2S]-[ferredoxin] + S-adenosyl-L-homocysteine</text>
        <dbReference type="Rhea" id="RHEA:43332"/>
        <dbReference type="Rhea" id="RHEA-COMP:10000"/>
        <dbReference type="Rhea" id="RHEA-COMP:10001"/>
        <dbReference type="Rhea" id="RHEA-COMP:10162"/>
        <dbReference type="Rhea" id="RHEA-COMP:10485"/>
        <dbReference type="ChEBI" id="CHEBI:17319"/>
        <dbReference type="ChEBI" id="CHEBI:33737"/>
        <dbReference type="ChEBI" id="CHEBI:33738"/>
        <dbReference type="ChEBI" id="CHEBI:57844"/>
        <dbReference type="ChEBI" id="CHEBI:57856"/>
        <dbReference type="ChEBI" id="CHEBI:59789"/>
        <dbReference type="ChEBI" id="CHEBI:74411"/>
        <dbReference type="ChEBI" id="CHEBI:74497"/>
        <dbReference type="EC" id="2.1.1.192"/>
    </reaction>
</comment>
<comment type="cofactor">
    <cofactor evidence="1">
        <name>[4Fe-4S] cluster</name>
        <dbReference type="ChEBI" id="CHEBI:49883"/>
    </cofactor>
    <text evidence="1">Binds 1 [4Fe-4S] cluster. The cluster is coordinated with 3 cysteines and an exchangeable S-adenosyl-L-methionine.</text>
</comment>
<comment type="subcellular location">
    <subcellularLocation>
        <location evidence="1">Cytoplasm</location>
    </subcellularLocation>
</comment>
<comment type="miscellaneous">
    <text evidence="1">Reaction proceeds by a ping-pong mechanism involving intermediate methylation of a conserved cysteine residue.</text>
</comment>
<comment type="similarity">
    <text evidence="1">Belongs to the radical SAM superfamily. RlmN family.</text>
</comment>
<evidence type="ECO:0000255" key="1">
    <source>
        <dbReference type="HAMAP-Rule" id="MF_01849"/>
    </source>
</evidence>
<evidence type="ECO:0000255" key="2">
    <source>
        <dbReference type="PROSITE-ProRule" id="PRU01266"/>
    </source>
</evidence>
<sequence>MQQDKVNLLGLNQKAIEDFFISIGKKKFHARQVFKWIHKKGVIDFDAMTDLGKNLRHKLKDKAQITIPKVVFSKASKDGTHKWLIDVGGSAVETVFIPEEGRGTLCVSSQIGCTLNCSFCSTGKQGFNRNLSAAEVIAQLWIAARTLSKTDGEHDFTVTNIVMMGMGEPLMNFENVVPAMDIMMDDLAYGLSRRKVTLSTSGVVPRIYDLLEQSGVSLAVSLHTPNDMLRNEIVPINKKYNIDELLEACKLYAQKGPHKHITFEYTLMEEVNDNLSDAEELVALLKSREVPAKINLIPFNPYPGTPYKKPSNNRIHRFKEFLQHNGFVTTVRKTRGDDIDAACGQLAGDVMDKTNRKQRYLKKLGDTNAN</sequence>
<feature type="chain" id="PRO_0000350181" description="Dual-specificity RNA methyltransferase RlmN">
    <location>
        <begin position="1"/>
        <end position="370"/>
    </location>
</feature>
<feature type="domain" description="Radical SAM core" evidence="2">
    <location>
        <begin position="99"/>
        <end position="337"/>
    </location>
</feature>
<feature type="active site" description="Proton acceptor" evidence="1">
    <location>
        <position position="93"/>
    </location>
</feature>
<feature type="active site" description="S-methylcysteine intermediate" evidence="1">
    <location>
        <position position="343"/>
    </location>
</feature>
<feature type="binding site" evidence="1">
    <location>
        <position position="113"/>
    </location>
    <ligand>
        <name>[4Fe-4S] cluster</name>
        <dbReference type="ChEBI" id="CHEBI:49883"/>
        <note>4Fe-4S-S-AdoMet</note>
    </ligand>
</feature>
<feature type="binding site" evidence="1">
    <location>
        <position position="117"/>
    </location>
    <ligand>
        <name>[4Fe-4S] cluster</name>
        <dbReference type="ChEBI" id="CHEBI:49883"/>
        <note>4Fe-4S-S-AdoMet</note>
    </ligand>
</feature>
<feature type="binding site" evidence="1">
    <location>
        <position position="120"/>
    </location>
    <ligand>
        <name>[4Fe-4S] cluster</name>
        <dbReference type="ChEBI" id="CHEBI:49883"/>
        <note>4Fe-4S-S-AdoMet</note>
    </ligand>
</feature>
<feature type="binding site" evidence="1">
    <location>
        <begin position="167"/>
        <end position="168"/>
    </location>
    <ligand>
        <name>S-adenosyl-L-methionine</name>
        <dbReference type="ChEBI" id="CHEBI:59789"/>
    </ligand>
</feature>
<feature type="binding site" evidence="1">
    <location>
        <position position="199"/>
    </location>
    <ligand>
        <name>S-adenosyl-L-methionine</name>
        <dbReference type="ChEBI" id="CHEBI:59789"/>
    </ligand>
</feature>
<feature type="binding site" evidence="1">
    <location>
        <begin position="221"/>
        <end position="223"/>
    </location>
    <ligand>
        <name>S-adenosyl-L-methionine</name>
        <dbReference type="ChEBI" id="CHEBI:59789"/>
    </ligand>
</feature>
<feature type="binding site" evidence="1">
    <location>
        <position position="300"/>
    </location>
    <ligand>
        <name>S-adenosyl-L-methionine</name>
        <dbReference type="ChEBI" id="CHEBI:59789"/>
    </ligand>
</feature>
<feature type="disulfide bond" description="(transient)" evidence="1">
    <location>
        <begin position="106"/>
        <end position="343"/>
    </location>
</feature>
<organism>
    <name type="scientific">Francisella tularensis subsp. holarctica (strain LVS)</name>
    <dbReference type="NCBI Taxonomy" id="376619"/>
    <lineage>
        <taxon>Bacteria</taxon>
        <taxon>Pseudomonadati</taxon>
        <taxon>Pseudomonadota</taxon>
        <taxon>Gammaproteobacteria</taxon>
        <taxon>Thiotrichales</taxon>
        <taxon>Francisellaceae</taxon>
        <taxon>Francisella</taxon>
    </lineage>
</organism>
<keyword id="KW-0004">4Fe-4S</keyword>
<keyword id="KW-0963">Cytoplasm</keyword>
<keyword id="KW-1015">Disulfide bond</keyword>
<keyword id="KW-0408">Iron</keyword>
<keyword id="KW-0411">Iron-sulfur</keyword>
<keyword id="KW-0479">Metal-binding</keyword>
<keyword id="KW-0489">Methyltransferase</keyword>
<keyword id="KW-1185">Reference proteome</keyword>
<keyword id="KW-0698">rRNA processing</keyword>
<keyword id="KW-0949">S-adenosyl-L-methionine</keyword>
<keyword id="KW-0808">Transferase</keyword>
<keyword id="KW-0819">tRNA processing</keyword>
<dbReference type="EC" id="2.1.1.192" evidence="1"/>
<dbReference type="EMBL" id="AM233362">
    <property type="protein sequence ID" value="CAJ79467.1"/>
    <property type="molecule type" value="Genomic_DNA"/>
</dbReference>
<dbReference type="RefSeq" id="WP_003015910.1">
    <property type="nucleotide sequence ID" value="NZ_CP009694.1"/>
</dbReference>
<dbReference type="SMR" id="Q2A3H3"/>
<dbReference type="KEGG" id="ftl:FTL_1028"/>
<dbReference type="Proteomes" id="UP000001944">
    <property type="component" value="Chromosome"/>
</dbReference>
<dbReference type="GO" id="GO:0005737">
    <property type="term" value="C:cytoplasm"/>
    <property type="evidence" value="ECO:0007669"/>
    <property type="project" value="UniProtKB-SubCell"/>
</dbReference>
<dbReference type="GO" id="GO:0051539">
    <property type="term" value="F:4 iron, 4 sulfur cluster binding"/>
    <property type="evidence" value="ECO:0007669"/>
    <property type="project" value="UniProtKB-UniRule"/>
</dbReference>
<dbReference type="GO" id="GO:0046872">
    <property type="term" value="F:metal ion binding"/>
    <property type="evidence" value="ECO:0007669"/>
    <property type="project" value="UniProtKB-KW"/>
</dbReference>
<dbReference type="GO" id="GO:0070040">
    <property type="term" value="F:rRNA (adenine(2503)-C2-)-methyltransferase activity"/>
    <property type="evidence" value="ECO:0007669"/>
    <property type="project" value="UniProtKB-UniRule"/>
</dbReference>
<dbReference type="GO" id="GO:0019843">
    <property type="term" value="F:rRNA binding"/>
    <property type="evidence" value="ECO:0007669"/>
    <property type="project" value="UniProtKB-UniRule"/>
</dbReference>
<dbReference type="GO" id="GO:0002935">
    <property type="term" value="F:tRNA (adenine(37)-C2)-methyltransferase activity"/>
    <property type="evidence" value="ECO:0007669"/>
    <property type="project" value="UniProtKB-UniRule"/>
</dbReference>
<dbReference type="GO" id="GO:0000049">
    <property type="term" value="F:tRNA binding"/>
    <property type="evidence" value="ECO:0007669"/>
    <property type="project" value="UniProtKB-UniRule"/>
</dbReference>
<dbReference type="GO" id="GO:0070475">
    <property type="term" value="P:rRNA base methylation"/>
    <property type="evidence" value="ECO:0007669"/>
    <property type="project" value="UniProtKB-UniRule"/>
</dbReference>
<dbReference type="GO" id="GO:0030488">
    <property type="term" value="P:tRNA methylation"/>
    <property type="evidence" value="ECO:0007669"/>
    <property type="project" value="UniProtKB-UniRule"/>
</dbReference>
<dbReference type="CDD" id="cd01335">
    <property type="entry name" value="Radical_SAM"/>
    <property type="match status" value="1"/>
</dbReference>
<dbReference type="FunFam" id="1.10.150.530:FF:000003">
    <property type="entry name" value="Dual-specificity RNA methyltransferase RlmN"/>
    <property type="match status" value="1"/>
</dbReference>
<dbReference type="FunFam" id="3.20.20.70:FF:000008">
    <property type="entry name" value="Dual-specificity RNA methyltransferase RlmN"/>
    <property type="match status" value="1"/>
</dbReference>
<dbReference type="Gene3D" id="1.10.150.530">
    <property type="match status" value="1"/>
</dbReference>
<dbReference type="Gene3D" id="3.20.20.70">
    <property type="entry name" value="Aldolase class I"/>
    <property type="match status" value="1"/>
</dbReference>
<dbReference type="HAMAP" id="MF_01849">
    <property type="entry name" value="RNA_methyltr_RlmN"/>
    <property type="match status" value="1"/>
</dbReference>
<dbReference type="InterPro" id="IPR013785">
    <property type="entry name" value="Aldolase_TIM"/>
</dbReference>
<dbReference type="InterPro" id="IPR006638">
    <property type="entry name" value="Elp3/MiaA/NifB-like_rSAM"/>
</dbReference>
<dbReference type="InterPro" id="IPR040072">
    <property type="entry name" value="Methyltransferase_A"/>
</dbReference>
<dbReference type="InterPro" id="IPR048641">
    <property type="entry name" value="RlmN_N"/>
</dbReference>
<dbReference type="InterPro" id="IPR027492">
    <property type="entry name" value="RNA_MTrfase_RlmN"/>
</dbReference>
<dbReference type="InterPro" id="IPR004383">
    <property type="entry name" value="rRNA_lsu_MTrfase_RlmN/Cfr"/>
</dbReference>
<dbReference type="InterPro" id="IPR007197">
    <property type="entry name" value="rSAM"/>
</dbReference>
<dbReference type="NCBIfam" id="TIGR00048">
    <property type="entry name" value="rRNA_mod_RlmN"/>
    <property type="match status" value="1"/>
</dbReference>
<dbReference type="PANTHER" id="PTHR30544">
    <property type="entry name" value="23S RRNA METHYLTRANSFERASE"/>
    <property type="match status" value="1"/>
</dbReference>
<dbReference type="PANTHER" id="PTHR30544:SF5">
    <property type="entry name" value="RADICAL SAM CORE DOMAIN-CONTAINING PROTEIN"/>
    <property type="match status" value="1"/>
</dbReference>
<dbReference type="Pfam" id="PF04055">
    <property type="entry name" value="Radical_SAM"/>
    <property type="match status" value="1"/>
</dbReference>
<dbReference type="Pfam" id="PF21016">
    <property type="entry name" value="RlmN_N"/>
    <property type="match status" value="1"/>
</dbReference>
<dbReference type="PIRSF" id="PIRSF006004">
    <property type="entry name" value="CHP00048"/>
    <property type="match status" value="1"/>
</dbReference>
<dbReference type="SFLD" id="SFLDF00275">
    <property type="entry name" value="adenosine_C2_methyltransferase"/>
    <property type="match status" value="1"/>
</dbReference>
<dbReference type="SFLD" id="SFLDG01082">
    <property type="entry name" value="B12-binding_domain_containing"/>
    <property type="match status" value="1"/>
</dbReference>
<dbReference type="SFLD" id="SFLDG01062">
    <property type="entry name" value="methyltransferase_(Class_A)"/>
    <property type="match status" value="1"/>
</dbReference>
<dbReference type="SMART" id="SM00729">
    <property type="entry name" value="Elp3"/>
    <property type="match status" value="1"/>
</dbReference>
<dbReference type="SUPFAM" id="SSF102114">
    <property type="entry name" value="Radical SAM enzymes"/>
    <property type="match status" value="1"/>
</dbReference>
<dbReference type="PROSITE" id="PS51918">
    <property type="entry name" value="RADICAL_SAM"/>
    <property type="match status" value="1"/>
</dbReference>
<protein>
    <recommendedName>
        <fullName evidence="1">Dual-specificity RNA methyltransferase RlmN</fullName>
        <ecNumber evidence="1">2.1.1.192</ecNumber>
    </recommendedName>
    <alternativeName>
        <fullName evidence="1">23S rRNA (adenine(2503)-C(2))-methyltransferase</fullName>
    </alternativeName>
    <alternativeName>
        <fullName evidence="1">23S rRNA m2A2503 methyltransferase</fullName>
    </alternativeName>
    <alternativeName>
        <fullName evidence="1">Ribosomal RNA large subunit methyltransferase N</fullName>
    </alternativeName>
    <alternativeName>
        <fullName evidence="1">tRNA (adenine(37)-C(2))-methyltransferase</fullName>
    </alternativeName>
    <alternativeName>
        <fullName evidence="1">tRNA m2A37 methyltransferase</fullName>
    </alternativeName>
</protein>